<comment type="function">
    <text evidence="2 4">Acetylates histones, giving a specific tag for transcriptional activation (By similarity). Mediates acetylation of histone H3 at 'Lys-18' and 'Lys-27' (H3K18ac and H3K27ac, respectively) (By similarity). Also acetylates non-histone proteins, like DDX21, FBL, IRF2, MAFG, NCOA3, POLR1E/PAF53 and FOXO1 (By similarity). Binds specifically to phosphorylated CREB and enhances its transcriptional activity toward cAMP-responsive genes. Acts as a coactivator of ALX1. Acts as a circadian transcriptional coactivator which enhances the activity of the circadian transcriptional activators: NPAS2-BMAL1 and CLOCK-BMAL1 heterodimers (By similarity). Acetylates PCNA; acetylation promotes removal of chromatin-bound PCNA and its degradation during nucleotide excision repair (NER) (By similarity). Acetylates POLR1E/PAF53, leading to decreased association of RNA polymerase I with the rDNA promoter region and coding region (By similarity). Acetylates DDX21, thereby inhibiting DDX21 helicase activity (By similarity). Acetylates FBL, preventing methylation of 'Gln-105' of histone H2A (H2AQ104me) (By similarity). In addition to protein acetyltransferase, can use different acyl-CoA substrates, such as lactoyl-CoA, and is able to mediate protein lactylation (By similarity). Catalyzes lactylation of MRE11 in response to DNA damage, thereby promoting DNA double-strand breaks (DSBs) via homologous recombination (HR) (By similarity). Functions as a transcriptional coactivator for SMAD4 in the TGF-beta signaling pathway (By similarity).</text>
</comment>
<comment type="catalytic activity">
    <reaction evidence="4">
        <text>L-lysyl-[histone] + acetyl-CoA = N(6)-acetyl-L-lysyl-[histone] + CoA + H(+)</text>
        <dbReference type="Rhea" id="RHEA:21992"/>
        <dbReference type="Rhea" id="RHEA-COMP:9845"/>
        <dbReference type="Rhea" id="RHEA-COMP:11338"/>
        <dbReference type="ChEBI" id="CHEBI:15378"/>
        <dbReference type="ChEBI" id="CHEBI:29969"/>
        <dbReference type="ChEBI" id="CHEBI:57287"/>
        <dbReference type="ChEBI" id="CHEBI:57288"/>
        <dbReference type="ChEBI" id="CHEBI:61930"/>
        <dbReference type="EC" id="2.3.1.48"/>
    </reaction>
</comment>
<comment type="catalytic activity">
    <reaction evidence="4">
        <text>L-lysyl-[protein] + acetyl-CoA = N(6)-acetyl-L-lysyl-[protein] + CoA + H(+)</text>
        <dbReference type="Rhea" id="RHEA:45948"/>
        <dbReference type="Rhea" id="RHEA-COMP:9752"/>
        <dbReference type="Rhea" id="RHEA-COMP:10731"/>
        <dbReference type="ChEBI" id="CHEBI:15378"/>
        <dbReference type="ChEBI" id="CHEBI:29969"/>
        <dbReference type="ChEBI" id="CHEBI:57287"/>
        <dbReference type="ChEBI" id="CHEBI:57288"/>
        <dbReference type="ChEBI" id="CHEBI:61930"/>
    </reaction>
</comment>
<comment type="catalytic activity">
    <reaction evidence="4">
        <text>(S)-lactoyl-CoA + L-lysyl-[protein] = N(6)-[(S)-lactoyl]-L-lysyl-[protein] + CoA + H(+)</text>
        <dbReference type="Rhea" id="RHEA:61996"/>
        <dbReference type="Rhea" id="RHEA-COMP:9752"/>
        <dbReference type="Rhea" id="RHEA-COMP:19466"/>
        <dbReference type="ChEBI" id="CHEBI:15378"/>
        <dbReference type="ChEBI" id="CHEBI:29969"/>
        <dbReference type="ChEBI" id="CHEBI:57287"/>
        <dbReference type="ChEBI" id="CHEBI:231527"/>
        <dbReference type="ChEBI" id="CHEBI:231528"/>
    </reaction>
    <physiologicalReaction direction="left-to-right" evidence="4">
        <dbReference type="Rhea" id="RHEA:61997"/>
    </physiologicalReaction>
</comment>
<comment type="subunit">
    <text evidence="2 4">Part of a complex composed of MSX3, CREBBP/CBP AND EP300/p300; the interaction with MSX3 decreases histone acetylation activity (By similarity). Found in a complex containing NCOA2; NCOA3; IKKA; IKKB and IKBKG. Probably part of a complex with HIF1A and EP300. Interacts with phosphorylated CREB1. Interacts with the C-terminal region of CITED4. The TAZ-type 1 domain interacts with HIF1A. Interacts with SRCAP, CARM1, ELF3, MLLT7/FOXO4, N4BP2, NCOA1, NCOA3, NCOA6, PCAF, DDX5, DDX17, PELP1, PML, SMAD1, SMAD2, SMAD3, SPIB, TRERF1 and ZCCHC12. Interacts with KLF1; the interaction results in acetylation and enhancement of transcriptional activity of KLF1. Interacts with DAXX; the interaction is dependent on CBP sumoylation and results in suppression of the transcriptional activity via recruitment of HDAC2 to DAXX. Interacts with MAF. Interacts with MTDH. Interacts with MAFG; the interaction acetylates MAFG in the basic region and stimulates NFE2 transcriptional activity through increasing its DNA-binding activity. Interacts with IRF2; the interaction acetylates IRF2 and regulates its activity on the H4 promoter. Interacts (via N-terminus) with SS18L1/CREST (via C-terminus) (By similarity). Interacts with IRF3 (when phosphorylated); forming the dsRNA-activated factor 1 (DRAF1), a complex which activates the transcription of the type I interferon genes (By similarity). Interacts with MECOM. Interacts with CITED1 (via C-terminus) Interacts with GATA1; the interaction results in acetylation and enhancement of transcriptional activity of GATA1. Interacts with FOXO1; the interaction acetylates FOXO1 and inhibits its transcriptional activity. Interacts with NPAS2, CLOCK and BMAL1. Interacts with ASF1A and ASF1B; this promotes histone acetylation. Interacts with acetylated TP53/p53 and with the acetylated histones H3 and H4. Interacts (via transactivation domain and C-terminus) with PCNA; the interaction occurs on chromatin in UV-irradiated damaged cells. Interacts with DHX9 (via N-terminus); this interaction mediates association with RNA polymerase II holoenzyme and stimulates CREB-dependent transcriptional activation (By similarity). Interacts with SMAD4; negatively regulated by ZBTB7A (By similarity). Forms a complex with KMT2A and CREB1 (By similarity). Interacts with DDX3X; this interaction may facilitate HNF4A acetylation (By similarity). Interacts with MSX1; the interaction may inhibit MSX1 autoinactivation (By similarity). Interacts with MSX3 (By similarity). Interacts with ACSS2 (By similarity).</text>
</comment>
<comment type="subcellular location">
    <subcellularLocation>
        <location evidence="4">Cytoplasm</location>
    </subcellularLocation>
    <subcellularLocation>
        <location evidence="4">Nucleus</location>
    </subcellularLocation>
    <text evidence="4">Recruited to nuclear bodies by SS18L1/CREST. In the presence of ALX1 relocalizes from the cytoplasm to the nucleus. Relocalizes from the nucleus to the cytoplasm following UV cell damage (By similarity).</text>
</comment>
<comment type="tissue specificity">
    <text evidence="12">Expressed in hypothalamus and cortex.</text>
</comment>
<comment type="induction">
    <text evidence="12">Up-regulated by IL-1 treatment.</text>
</comment>
<comment type="PTM">
    <text evidence="2">Methylation of the KIX domain by CARM1 blocks association with CREB. This results in the blockade of CREB signaling, and in activation of apoptotic response (By similarity).</text>
</comment>
<comment type="PTM">
    <text evidence="4">Phosphorylated by CHUK/IKKA at Ser-1383 and Ser-1387; these phosphorylations promote cell growth by switching the binding preference of CREBBP from TP53 to NF-kappa-B.</text>
</comment>
<comment type="PTM">
    <text evidence="2">Sumoylation negatively regulates transcriptional activity via the recruitment of DAAX.</text>
</comment>
<comment type="PTM">
    <text evidence="4">Autoacetylation is required for binding to protein substrates, such as acetylated histones and acetylated TP53/p53. Autoacetylation is induced by glucose and fatty acids.</text>
</comment>
<dbReference type="EC" id="2.3.1.48" evidence="4"/>
<dbReference type="EC" id="2.3.1.-" evidence="4"/>
<dbReference type="EMBL" id="AY462245">
    <property type="protein sequence ID" value="AAR23149.1"/>
    <property type="molecule type" value="mRNA"/>
</dbReference>
<dbReference type="BMRB" id="Q6JHU9"/>
<dbReference type="SMR" id="Q6JHU9"/>
<dbReference type="FunCoup" id="Q6JHU9">
    <property type="interactions" value="2753"/>
</dbReference>
<dbReference type="IntAct" id="Q6JHU9">
    <property type="interactions" value="1"/>
</dbReference>
<dbReference type="MINT" id="Q6JHU9"/>
<dbReference type="STRING" id="10116.ENSRNOP00000007079"/>
<dbReference type="GlyGen" id="Q6JHU9">
    <property type="glycosylation" value="7 sites"/>
</dbReference>
<dbReference type="iPTMnet" id="Q6JHU9"/>
<dbReference type="PhosphoSitePlus" id="Q6JHU9"/>
<dbReference type="PaxDb" id="10116-ENSRNOP00000007079"/>
<dbReference type="UCSC" id="RGD:2401">
    <property type="organism name" value="rat"/>
</dbReference>
<dbReference type="AGR" id="RGD:2401"/>
<dbReference type="RGD" id="2401">
    <property type="gene designation" value="Crebbp"/>
</dbReference>
<dbReference type="eggNOG" id="KOG1778">
    <property type="taxonomic scope" value="Eukaryota"/>
</dbReference>
<dbReference type="InParanoid" id="Q6JHU9"/>
<dbReference type="Reactome" id="R-RNO-1234158">
    <property type="pathway name" value="Regulation of gene expression by Hypoxia-inducible Factor"/>
</dbReference>
<dbReference type="Reactome" id="R-RNO-201722">
    <property type="pathway name" value="Formation of the beta-catenin:TCF transactivating complex"/>
</dbReference>
<dbReference type="Reactome" id="R-RNO-3134973">
    <property type="pathway name" value="LRR FLII-interacting protein 1 (LRRFIP1) activates type I IFN production"/>
</dbReference>
<dbReference type="Reactome" id="R-RNO-3371568">
    <property type="pathway name" value="Attenuation phase"/>
</dbReference>
<dbReference type="Reactome" id="R-RNO-350054">
    <property type="pathway name" value="Notch-HLH transcription pathway"/>
</dbReference>
<dbReference type="Reactome" id="R-RNO-400206">
    <property type="pathway name" value="Regulation of lipid metabolism by PPARalpha"/>
</dbReference>
<dbReference type="Reactome" id="R-RNO-8866907">
    <property type="pathway name" value="Activation of the TFAP2 (AP-2) family of transcription factors"/>
</dbReference>
<dbReference type="Reactome" id="R-RNO-8939246">
    <property type="pathway name" value="RUNX1 regulates transcription of genes involved in differentiation of myeloid cells"/>
</dbReference>
<dbReference type="Reactome" id="R-RNO-8941856">
    <property type="pathway name" value="RUNX3 regulates NOTCH signaling"/>
</dbReference>
<dbReference type="Reactome" id="R-RNO-9018519">
    <property type="pathway name" value="Estrogen-dependent gene expression"/>
</dbReference>
<dbReference type="Reactome" id="R-RNO-933541">
    <property type="pathway name" value="TRAF6 mediated IRF7 activation"/>
</dbReference>
<dbReference type="Reactome" id="R-RNO-9617629">
    <property type="pathway name" value="Regulation of FOXO transcriptional activity by acetylation"/>
</dbReference>
<dbReference type="Reactome" id="R-RNO-9707564">
    <property type="pathway name" value="Cytoprotection by HMOX1"/>
</dbReference>
<dbReference type="Reactome" id="R-RNO-9759194">
    <property type="pathway name" value="Nuclear events mediated by NFE2L2"/>
</dbReference>
<dbReference type="Reactome" id="R-RNO-9841922">
    <property type="pathway name" value="MLL4 and MLL3 complexes regulate expression of PPARG target genes in adipogenesis and hepatic steatosis"/>
</dbReference>
<dbReference type="Reactome" id="R-RNO-9856649">
    <property type="pathway name" value="Transcriptional and post-translational regulation of MITF-M expression and activity"/>
</dbReference>
<dbReference type="PRO" id="PR:Q6JHU9"/>
<dbReference type="Proteomes" id="UP000002494">
    <property type="component" value="Unplaced"/>
</dbReference>
<dbReference type="GO" id="GO:0000785">
    <property type="term" value="C:chromatin"/>
    <property type="evidence" value="ECO:0000266"/>
    <property type="project" value="RGD"/>
</dbReference>
<dbReference type="GO" id="GO:0005737">
    <property type="term" value="C:cytoplasm"/>
    <property type="evidence" value="ECO:0000266"/>
    <property type="project" value="RGD"/>
</dbReference>
<dbReference type="GO" id="GO:0000123">
    <property type="term" value="C:histone acetyltransferase complex"/>
    <property type="evidence" value="ECO:0000266"/>
    <property type="project" value="RGD"/>
</dbReference>
<dbReference type="GO" id="GO:0016604">
    <property type="term" value="C:nuclear body"/>
    <property type="evidence" value="ECO:0000314"/>
    <property type="project" value="RGD"/>
</dbReference>
<dbReference type="GO" id="GO:0005654">
    <property type="term" value="C:nucleoplasm"/>
    <property type="evidence" value="ECO:0000304"/>
    <property type="project" value="Reactome"/>
</dbReference>
<dbReference type="GO" id="GO:0005634">
    <property type="term" value="C:nucleus"/>
    <property type="evidence" value="ECO:0000266"/>
    <property type="project" value="RGD"/>
</dbReference>
<dbReference type="GO" id="GO:0000940">
    <property type="term" value="C:outer kinetochore"/>
    <property type="evidence" value="ECO:0000266"/>
    <property type="project" value="RGD"/>
</dbReference>
<dbReference type="GO" id="GO:0032991">
    <property type="term" value="C:protein-containing complex"/>
    <property type="evidence" value="ECO:0000266"/>
    <property type="project" value="RGD"/>
</dbReference>
<dbReference type="GO" id="GO:0090575">
    <property type="term" value="C:RNA polymerase II transcription regulator complex"/>
    <property type="evidence" value="ECO:0000266"/>
    <property type="project" value="RGD"/>
</dbReference>
<dbReference type="GO" id="GO:0005667">
    <property type="term" value="C:transcription regulator complex"/>
    <property type="evidence" value="ECO:0000314"/>
    <property type="project" value="RGD"/>
</dbReference>
<dbReference type="GO" id="GO:0016407">
    <property type="term" value="F:acetyltransferase activity"/>
    <property type="evidence" value="ECO:0000250"/>
    <property type="project" value="UniProtKB"/>
</dbReference>
<dbReference type="GO" id="GO:0008140">
    <property type="term" value="F:cAMP response element binding protein binding"/>
    <property type="evidence" value="ECO:0000266"/>
    <property type="project" value="RGD"/>
</dbReference>
<dbReference type="GO" id="GO:0003682">
    <property type="term" value="F:chromatin binding"/>
    <property type="evidence" value="ECO:0000250"/>
    <property type="project" value="UniProtKB"/>
</dbReference>
<dbReference type="GO" id="GO:0031490">
    <property type="term" value="F:chromatin DNA binding"/>
    <property type="evidence" value="ECO:0000318"/>
    <property type="project" value="GO_Central"/>
</dbReference>
<dbReference type="GO" id="GO:0003684">
    <property type="term" value="F:damaged DNA binding"/>
    <property type="evidence" value="ECO:0000250"/>
    <property type="project" value="UniProtKB"/>
</dbReference>
<dbReference type="GO" id="GO:0097718">
    <property type="term" value="F:disordered domain specific binding"/>
    <property type="evidence" value="ECO:0000266"/>
    <property type="project" value="RGD"/>
</dbReference>
<dbReference type="GO" id="GO:0003677">
    <property type="term" value="F:DNA binding"/>
    <property type="evidence" value="ECO:0000266"/>
    <property type="project" value="RGD"/>
</dbReference>
<dbReference type="GO" id="GO:0140297">
    <property type="term" value="F:DNA-binding transcription factor binding"/>
    <property type="evidence" value="ECO:0000353"/>
    <property type="project" value="RGD"/>
</dbReference>
<dbReference type="GO" id="GO:0004402">
    <property type="term" value="F:histone acetyltransferase activity"/>
    <property type="evidence" value="ECO:0000314"/>
    <property type="project" value="RGD"/>
</dbReference>
<dbReference type="GO" id="GO:0043993">
    <property type="term" value="F:histone H3K18 acetyltransferase activity"/>
    <property type="evidence" value="ECO:0000250"/>
    <property type="project" value="UniProtKB"/>
</dbReference>
<dbReference type="GO" id="GO:0044017">
    <property type="term" value="F:histone H3K27 acetyltransferase activity"/>
    <property type="evidence" value="ECO:0000250"/>
    <property type="project" value="UniProtKB"/>
</dbReference>
<dbReference type="GO" id="GO:0060090">
    <property type="term" value="F:molecular adaptor activity"/>
    <property type="evidence" value="ECO:0000266"/>
    <property type="project" value="RGD"/>
</dbReference>
<dbReference type="GO" id="GO:0043426">
    <property type="term" value="F:MRF binding"/>
    <property type="evidence" value="ECO:0000250"/>
    <property type="project" value="UniProtKB"/>
</dbReference>
<dbReference type="GO" id="GO:0002039">
    <property type="term" value="F:p53 binding"/>
    <property type="evidence" value="ECO:0000266"/>
    <property type="project" value="RGD"/>
</dbReference>
<dbReference type="GO" id="GO:0120300">
    <property type="term" value="F:peptide lactyltransferase (CoA-dependent) activity"/>
    <property type="evidence" value="ECO:0000250"/>
    <property type="project" value="UniProtKB"/>
</dbReference>
<dbReference type="GO" id="GO:0042975">
    <property type="term" value="F:peroxisome proliferator activated receptor binding"/>
    <property type="evidence" value="ECO:0000314"/>
    <property type="project" value="RGD"/>
</dbReference>
<dbReference type="GO" id="GO:0019904">
    <property type="term" value="F:protein domain specific binding"/>
    <property type="evidence" value="ECO:0000266"/>
    <property type="project" value="RGD"/>
</dbReference>
<dbReference type="GO" id="GO:0044877">
    <property type="term" value="F:protein-containing complex binding"/>
    <property type="evidence" value="ECO:0000353"/>
    <property type="project" value="RGD"/>
</dbReference>
<dbReference type="GO" id="GO:0061733">
    <property type="term" value="F:protein-lysine-acetyltransferase activity"/>
    <property type="evidence" value="ECO:0000266"/>
    <property type="project" value="RGD"/>
</dbReference>
<dbReference type="GO" id="GO:0000977">
    <property type="term" value="F:RNA polymerase II transcription regulatory region sequence-specific DNA binding"/>
    <property type="evidence" value="ECO:0000266"/>
    <property type="project" value="RGD"/>
</dbReference>
<dbReference type="GO" id="GO:0061629">
    <property type="term" value="F:RNA polymerase II-specific DNA-binding transcription factor binding"/>
    <property type="evidence" value="ECO:0000266"/>
    <property type="project" value="RGD"/>
</dbReference>
<dbReference type="GO" id="GO:0046332">
    <property type="term" value="F:SMAD binding"/>
    <property type="evidence" value="ECO:0000353"/>
    <property type="project" value="RGD"/>
</dbReference>
<dbReference type="GO" id="GO:0001093">
    <property type="term" value="F:TFIIB-class transcription factor binding"/>
    <property type="evidence" value="ECO:0000266"/>
    <property type="project" value="RGD"/>
</dbReference>
<dbReference type="GO" id="GO:0003713">
    <property type="term" value="F:transcription coactivator activity"/>
    <property type="evidence" value="ECO:0000266"/>
    <property type="project" value="RGD"/>
</dbReference>
<dbReference type="GO" id="GO:0001223">
    <property type="term" value="F:transcription coactivator binding"/>
    <property type="evidence" value="ECO:0000353"/>
    <property type="project" value="RGD"/>
</dbReference>
<dbReference type="GO" id="GO:0003714">
    <property type="term" value="F:transcription corepressor activity"/>
    <property type="evidence" value="ECO:0000266"/>
    <property type="project" value="RGD"/>
</dbReference>
<dbReference type="GO" id="GO:0008270">
    <property type="term" value="F:zinc ion binding"/>
    <property type="evidence" value="ECO:0000266"/>
    <property type="project" value="RGD"/>
</dbReference>
<dbReference type="GO" id="GO:0048148">
    <property type="term" value="P:behavioral response to cocaine"/>
    <property type="evidence" value="ECO:0000315"/>
    <property type="project" value="RGD"/>
</dbReference>
<dbReference type="GO" id="GO:0007249">
    <property type="term" value="P:canonical NF-kappaB signal transduction"/>
    <property type="evidence" value="ECO:0000266"/>
    <property type="project" value="RGD"/>
</dbReference>
<dbReference type="GO" id="GO:0035729">
    <property type="term" value="P:cellular response to hepatocyte growth factor stimulus"/>
    <property type="evidence" value="ECO:0000266"/>
    <property type="project" value="RGD"/>
</dbReference>
<dbReference type="GO" id="GO:0031669">
    <property type="term" value="P:cellular response to nutrient levels"/>
    <property type="evidence" value="ECO:0000266"/>
    <property type="project" value="RGD"/>
</dbReference>
<dbReference type="GO" id="GO:0034644">
    <property type="term" value="P:cellular response to UV"/>
    <property type="evidence" value="ECO:0000250"/>
    <property type="project" value="UniProtKB"/>
</dbReference>
<dbReference type="GO" id="GO:0098586">
    <property type="term" value="P:cellular response to virus"/>
    <property type="evidence" value="ECO:0000266"/>
    <property type="project" value="RGD"/>
</dbReference>
<dbReference type="GO" id="GO:0060325">
    <property type="term" value="P:face morphogenesis"/>
    <property type="evidence" value="ECO:0000266"/>
    <property type="project" value="RGD"/>
</dbReference>
<dbReference type="GO" id="GO:0030718">
    <property type="term" value="P:germ-line stem cell population maintenance"/>
    <property type="evidence" value="ECO:0000266"/>
    <property type="project" value="RGD"/>
</dbReference>
<dbReference type="GO" id="GO:0007616">
    <property type="term" value="P:long-term memory"/>
    <property type="evidence" value="ECO:0000315"/>
    <property type="project" value="RGD"/>
</dbReference>
<dbReference type="GO" id="GO:0032688">
    <property type="term" value="P:negative regulation of interferon-beta production"/>
    <property type="evidence" value="ECO:0000266"/>
    <property type="project" value="RGD"/>
</dbReference>
<dbReference type="GO" id="GO:0016479">
    <property type="term" value="P:negative regulation of transcription by RNA polymerase I"/>
    <property type="evidence" value="ECO:0000250"/>
    <property type="project" value="UniProtKB"/>
</dbReference>
<dbReference type="GO" id="GO:0000122">
    <property type="term" value="P:negative regulation of transcription by RNA polymerase II"/>
    <property type="evidence" value="ECO:0000266"/>
    <property type="project" value="RGD"/>
</dbReference>
<dbReference type="GO" id="GO:0048525">
    <property type="term" value="P:negative regulation of viral process"/>
    <property type="evidence" value="ECO:0000266"/>
    <property type="project" value="RGD"/>
</dbReference>
<dbReference type="GO" id="GO:0060355">
    <property type="term" value="P:positive regulation of cell adhesion molecule production"/>
    <property type="evidence" value="ECO:0000315"/>
    <property type="project" value="RGD"/>
</dbReference>
<dbReference type="GO" id="GO:0060999">
    <property type="term" value="P:positive regulation of dendritic spine development"/>
    <property type="evidence" value="ECO:0000315"/>
    <property type="project" value="RGD"/>
</dbReference>
<dbReference type="GO" id="GO:0045893">
    <property type="term" value="P:positive regulation of DNA-templated transcription"/>
    <property type="evidence" value="ECO:0000250"/>
    <property type="project" value="UniProtKB"/>
</dbReference>
<dbReference type="GO" id="GO:1905168">
    <property type="term" value="P:positive regulation of double-strand break repair via homologous recombination"/>
    <property type="evidence" value="ECO:0000250"/>
    <property type="project" value="UniProtKB"/>
</dbReference>
<dbReference type="GO" id="GO:1900087">
    <property type="term" value="P:positive regulation of G1/S transition of mitotic cell cycle"/>
    <property type="evidence" value="ECO:0000315"/>
    <property type="project" value="RGD"/>
</dbReference>
<dbReference type="GO" id="GO:0010628">
    <property type="term" value="P:positive regulation of gene expression"/>
    <property type="evidence" value="ECO:0000266"/>
    <property type="project" value="RGD"/>
</dbReference>
<dbReference type="GO" id="GO:1901224">
    <property type="term" value="P:positive regulation of non-canonical NF-kappaB signal transduction"/>
    <property type="evidence" value="ECO:0000315"/>
    <property type="project" value="RGD"/>
</dbReference>
<dbReference type="GO" id="GO:1900182">
    <property type="term" value="P:positive regulation of protein localization to nucleus"/>
    <property type="evidence" value="ECO:0000266"/>
    <property type="project" value="RGD"/>
</dbReference>
<dbReference type="GO" id="GO:0045944">
    <property type="term" value="P:positive regulation of transcription by RNA polymerase II"/>
    <property type="evidence" value="ECO:0000315"/>
    <property type="project" value="RGD"/>
</dbReference>
<dbReference type="GO" id="GO:0030511">
    <property type="term" value="P:positive regulation of transforming growth factor beta receptor signaling pathway"/>
    <property type="evidence" value="ECO:0000266"/>
    <property type="project" value="RGD"/>
</dbReference>
<dbReference type="GO" id="GO:0031648">
    <property type="term" value="P:protein destabilization"/>
    <property type="evidence" value="ECO:0000250"/>
    <property type="project" value="UniProtKB"/>
</dbReference>
<dbReference type="GO" id="GO:0036211">
    <property type="term" value="P:protein modification process"/>
    <property type="evidence" value="ECO:0000314"/>
    <property type="project" value="RGD"/>
</dbReference>
<dbReference type="GO" id="GO:0006355">
    <property type="term" value="P:regulation of DNA-templated transcription"/>
    <property type="evidence" value="ECO:0000314"/>
    <property type="project" value="RGD"/>
</dbReference>
<dbReference type="GO" id="GO:0070555">
    <property type="term" value="P:response to interleukin-1"/>
    <property type="evidence" value="ECO:0000270"/>
    <property type="project" value="RGD"/>
</dbReference>
<dbReference type="GO" id="GO:0002931">
    <property type="term" value="P:response to ischemia"/>
    <property type="evidence" value="ECO:0000270"/>
    <property type="project" value="RGD"/>
</dbReference>
<dbReference type="GO" id="GO:0048511">
    <property type="term" value="P:rhythmic process"/>
    <property type="evidence" value="ECO:0007669"/>
    <property type="project" value="UniProtKB-KW"/>
</dbReference>
<dbReference type="CDD" id="cd05495">
    <property type="entry name" value="Bromo_cbp_like"/>
    <property type="match status" value="1"/>
</dbReference>
<dbReference type="CDD" id="cd20910">
    <property type="entry name" value="NCBD_CREBBP-p300_like"/>
    <property type="match status" value="1"/>
</dbReference>
<dbReference type="CDD" id="cd15557">
    <property type="entry name" value="PHD_CBP_p300"/>
    <property type="match status" value="1"/>
</dbReference>
<dbReference type="CDD" id="cd15802">
    <property type="entry name" value="RING_CBP-p300"/>
    <property type="match status" value="1"/>
</dbReference>
<dbReference type="CDD" id="cd02337">
    <property type="entry name" value="ZZ_CBP"/>
    <property type="match status" value="1"/>
</dbReference>
<dbReference type="FunFam" id="1.10.246.20:FF:000001">
    <property type="entry name" value="E1A binding protein p300"/>
    <property type="match status" value="1"/>
</dbReference>
<dbReference type="FunFam" id="1.20.1020.10:FF:000001">
    <property type="entry name" value="E1A binding protein p300"/>
    <property type="match status" value="1"/>
</dbReference>
<dbReference type="FunFam" id="1.20.1020.10:FF:000002">
    <property type="entry name" value="E1A binding protein p300"/>
    <property type="match status" value="1"/>
</dbReference>
<dbReference type="FunFam" id="2.10.110.40:FF:000001">
    <property type="entry name" value="E1A binding protein p300"/>
    <property type="match status" value="1"/>
</dbReference>
<dbReference type="FunFam" id="3.30.60.90:FF:000003">
    <property type="entry name" value="E1A binding protein p300"/>
    <property type="match status" value="1"/>
</dbReference>
<dbReference type="FunFam" id="1.20.920.10:FF:000001">
    <property type="entry name" value="Histone acetyltransferase p300"/>
    <property type="match status" value="1"/>
</dbReference>
<dbReference type="FunFam" id="3.30.40.10:FF:000034">
    <property type="entry name" value="Histone acetyltransferase p300"/>
    <property type="match status" value="1"/>
</dbReference>
<dbReference type="Gene3D" id="2.10.110.40">
    <property type="match status" value="1"/>
</dbReference>
<dbReference type="Gene3D" id="3.30.60.90">
    <property type="match status" value="1"/>
</dbReference>
<dbReference type="Gene3D" id="1.20.920.10">
    <property type="entry name" value="Bromodomain-like"/>
    <property type="match status" value="1"/>
</dbReference>
<dbReference type="Gene3D" id="1.10.246.20">
    <property type="entry name" value="Coactivator CBP, KIX domain"/>
    <property type="match status" value="1"/>
</dbReference>
<dbReference type="Gene3D" id="1.10.1630.10">
    <property type="entry name" value="Nuclear receptor coactivator, CREB-bp-like, interlocking domain"/>
    <property type="match status" value="1"/>
</dbReference>
<dbReference type="Gene3D" id="1.20.1020.10">
    <property type="entry name" value="TAZ domain"/>
    <property type="match status" value="2"/>
</dbReference>
<dbReference type="Gene3D" id="3.30.40.10">
    <property type="entry name" value="Zinc/RING finger domain, C3HC4 (zinc finger)"/>
    <property type="match status" value="1"/>
</dbReference>
<dbReference type="InterPro" id="IPR001487">
    <property type="entry name" value="Bromodomain"/>
</dbReference>
<dbReference type="InterPro" id="IPR036427">
    <property type="entry name" value="Bromodomain-like_sf"/>
</dbReference>
<dbReference type="InterPro" id="IPR018359">
    <property type="entry name" value="Bromodomain_CS"/>
</dbReference>
<dbReference type="InterPro" id="IPR031162">
    <property type="entry name" value="CBP_P300_HAT"/>
</dbReference>
<dbReference type="InterPro" id="IPR013178">
    <property type="entry name" value="Histone_AcTrfase_Rtt109/CBP"/>
</dbReference>
<dbReference type="InterPro" id="IPR003101">
    <property type="entry name" value="KIX_dom"/>
</dbReference>
<dbReference type="InterPro" id="IPR036529">
    <property type="entry name" value="KIX_dom_sf"/>
</dbReference>
<dbReference type="InterPro" id="IPR009110">
    <property type="entry name" value="Nuc_rcpt_coact"/>
</dbReference>
<dbReference type="InterPro" id="IPR014744">
    <property type="entry name" value="Nuc_rcpt_coact_CREBbp"/>
</dbReference>
<dbReference type="InterPro" id="IPR037073">
    <property type="entry name" value="Nuc_rcpt_coact_CREBbp_sf"/>
</dbReference>
<dbReference type="InterPro" id="IPR056484">
    <property type="entry name" value="PHD_P300"/>
</dbReference>
<dbReference type="InterPro" id="IPR010303">
    <property type="entry name" value="RING_CBP-p300"/>
</dbReference>
<dbReference type="InterPro" id="IPR038547">
    <property type="entry name" value="RING_CBP-p300_sf"/>
</dbReference>
<dbReference type="InterPro" id="IPR035898">
    <property type="entry name" value="TAZ_dom_sf"/>
</dbReference>
<dbReference type="InterPro" id="IPR013083">
    <property type="entry name" value="Znf_RING/FYVE/PHD"/>
</dbReference>
<dbReference type="InterPro" id="IPR000197">
    <property type="entry name" value="Znf_TAZ"/>
</dbReference>
<dbReference type="InterPro" id="IPR000433">
    <property type="entry name" value="Znf_ZZ"/>
</dbReference>
<dbReference type="InterPro" id="IPR043145">
    <property type="entry name" value="Znf_ZZ_sf"/>
</dbReference>
<dbReference type="PANTHER" id="PTHR13808">
    <property type="entry name" value="CBP/P300-RELATED"/>
    <property type="match status" value="1"/>
</dbReference>
<dbReference type="PANTHER" id="PTHR13808:SF34">
    <property type="entry name" value="CREB-BINDING PROTEIN"/>
    <property type="match status" value="1"/>
</dbReference>
<dbReference type="Pfam" id="PF00439">
    <property type="entry name" value="Bromodomain"/>
    <property type="match status" value="1"/>
</dbReference>
<dbReference type="Pfam" id="PF09030">
    <property type="entry name" value="Creb_binding"/>
    <property type="match status" value="1"/>
</dbReference>
<dbReference type="Pfam" id="PF08214">
    <property type="entry name" value="HAT_KAT11"/>
    <property type="match status" value="1"/>
</dbReference>
<dbReference type="Pfam" id="PF02172">
    <property type="entry name" value="KIX"/>
    <property type="match status" value="1"/>
</dbReference>
<dbReference type="Pfam" id="PF23570">
    <property type="entry name" value="PHD_P300"/>
    <property type="match status" value="1"/>
</dbReference>
<dbReference type="Pfam" id="PF06001">
    <property type="entry name" value="RING_CBP-p300"/>
    <property type="match status" value="1"/>
</dbReference>
<dbReference type="Pfam" id="PF02135">
    <property type="entry name" value="zf-TAZ"/>
    <property type="match status" value="2"/>
</dbReference>
<dbReference type="Pfam" id="PF00569">
    <property type="entry name" value="ZZ"/>
    <property type="match status" value="1"/>
</dbReference>
<dbReference type="PRINTS" id="PR00503">
    <property type="entry name" value="BROMODOMAIN"/>
</dbReference>
<dbReference type="SMART" id="SM00297">
    <property type="entry name" value="BROMO"/>
    <property type="match status" value="1"/>
</dbReference>
<dbReference type="SMART" id="SM01250">
    <property type="entry name" value="KAT11"/>
    <property type="match status" value="1"/>
</dbReference>
<dbReference type="SMART" id="SM00551">
    <property type="entry name" value="ZnF_TAZ"/>
    <property type="match status" value="2"/>
</dbReference>
<dbReference type="SMART" id="SM00291">
    <property type="entry name" value="ZnF_ZZ"/>
    <property type="match status" value="1"/>
</dbReference>
<dbReference type="SUPFAM" id="SSF47370">
    <property type="entry name" value="Bromodomain"/>
    <property type="match status" value="1"/>
</dbReference>
<dbReference type="SUPFAM" id="SSF47040">
    <property type="entry name" value="Kix domain of CBP (creb binding protein)"/>
    <property type="match status" value="1"/>
</dbReference>
<dbReference type="SUPFAM" id="SSF69125">
    <property type="entry name" value="Nuclear receptor coactivator interlocking domain"/>
    <property type="match status" value="1"/>
</dbReference>
<dbReference type="SUPFAM" id="SSF57850">
    <property type="entry name" value="RING/U-box"/>
    <property type="match status" value="1"/>
</dbReference>
<dbReference type="SUPFAM" id="SSF57933">
    <property type="entry name" value="TAZ domain"/>
    <property type="match status" value="2"/>
</dbReference>
<dbReference type="PROSITE" id="PS00633">
    <property type="entry name" value="BROMODOMAIN_1"/>
    <property type="match status" value="1"/>
</dbReference>
<dbReference type="PROSITE" id="PS50014">
    <property type="entry name" value="BROMODOMAIN_2"/>
    <property type="match status" value="1"/>
</dbReference>
<dbReference type="PROSITE" id="PS51727">
    <property type="entry name" value="CBP_P300_HAT"/>
    <property type="match status" value="1"/>
</dbReference>
<dbReference type="PROSITE" id="PS50952">
    <property type="entry name" value="KIX"/>
    <property type="match status" value="1"/>
</dbReference>
<dbReference type="PROSITE" id="PS50134">
    <property type="entry name" value="ZF_TAZ"/>
    <property type="match status" value="2"/>
</dbReference>
<dbReference type="PROSITE" id="PS01357">
    <property type="entry name" value="ZF_ZZ_1"/>
    <property type="match status" value="1"/>
</dbReference>
<dbReference type="PROSITE" id="PS50135">
    <property type="entry name" value="ZF_ZZ_2"/>
    <property type="match status" value="1"/>
</dbReference>
<accession>Q6JHU9</accession>
<organism>
    <name type="scientific">Rattus norvegicus</name>
    <name type="common">Rat</name>
    <dbReference type="NCBI Taxonomy" id="10116"/>
    <lineage>
        <taxon>Eukaryota</taxon>
        <taxon>Metazoa</taxon>
        <taxon>Chordata</taxon>
        <taxon>Craniata</taxon>
        <taxon>Vertebrata</taxon>
        <taxon>Euteleostomi</taxon>
        <taxon>Mammalia</taxon>
        <taxon>Eutheria</taxon>
        <taxon>Euarchontoglires</taxon>
        <taxon>Glires</taxon>
        <taxon>Rodentia</taxon>
        <taxon>Myomorpha</taxon>
        <taxon>Muroidea</taxon>
        <taxon>Muridae</taxon>
        <taxon>Murinae</taxon>
        <taxon>Rattus</taxon>
    </lineage>
</organism>
<reference key="1">
    <citation type="journal article" date="2005" name="Brain Res. Mol. Brain Res.">
        <title>Interleukin-1beta induces CREB-binding protein (CBP) mRNA in brain and the sequencing of rat CBP.</title>
        <authorList>
            <person name="Tang C."/>
            <person name="Sula M.J."/>
            <person name="Bohnet S."/>
            <person name="Rehman A."/>
            <person name="Taishi P."/>
            <person name="Krueger J.M."/>
        </authorList>
    </citation>
    <scope>NUCLEOTIDE SEQUENCE [MRNA]</scope>
    <scope>TISSUE SPECIFICITY</scope>
    <scope>INDUCTION</scope>
    <source>
        <strain>Sprague-Dawley</strain>
    </source>
</reference>
<reference key="2">
    <citation type="journal article" date="2012" name="Nat. Commun.">
        <title>Quantitative maps of protein phosphorylation sites across 14 different rat organs and tissues.</title>
        <authorList>
            <person name="Lundby A."/>
            <person name="Secher A."/>
            <person name="Lage K."/>
            <person name="Nordsborg N.B."/>
            <person name="Dmytriyev A."/>
            <person name="Lundby C."/>
            <person name="Olsen J.V."/>
        </authorList>
    </citation>
    <scope>PHOSPHORYLATION [LARGE SCALE ANALYSIS] AT SER-2064</scope>
    <scope>IDENTIFICATION BY MASS SPECTROMETRY [LARGE SCALE ANALYSIS]</scope>
</reference>
<proteinExistence type="evidence at protein level"/>
<keyword id="KW-0007">Acetylation</keyword>
<keyword id="KW-0010">Activator</keyword>
<keyword id="KW-0012">Acyltransferase</keyword>
<keyword id="KW-0090">Biological rhythms</keyword>
<keyword id="KW-0103">Bromodomain</keyword>
<keyword id="KW-0175">Coiled coil</keyword>
<keyword id="KW-0963">Cytoplasm</keyword>
<keyword id="KW-1017">Isopeptide bond</keyword>
<keyword id="KW-0479">Metal-binding</keyword>
<keyword id="KW-0488">Methylation</keyword>
<keyword id="KW-0539">Nucleus</keyword>
<keyword id="KW-0597">Phosphoprotein</keyword>
<keyword id="KW-1185">Reference proteome</keyword>
<keyword id="KW-0677">Repeat</keyword>
<keyword id="KW-0804">Transcription</keyword>
<keyword id="KW-0805">Transcription regulation</keyword>
<keyword id="KW-0808">Transferase</keyword>
<keyword id="KW-0832">Ubl conjugation</keyword>
<keyword id="KW-0862">Zinc</keyword>
<keyword id="KW-0863">Zinc-finger</keyword>
<gene>
    <name type="primary">Crebbp</name>
    <name type="synonym">Cbp</name>
</gene>
<sequence length="2442" mass="265424">MAENLLDGPPNPKRAKLSSPGFSANDSTDFGSLFDLENDLPDELIPNGELSLLNSGNLVPDAASKHKQLSELLRGGSGSSITPGIGNVSASSPVQQGLGGQAQGQPNSTSMASLGAMGKSPLNPGDSSTPSLPKQAASTSGPTPPASQALNPQAQKQVGLVTSSPATSQTGPGICMNANFNQTHPGLLNSNSGHSLMNQAQQGQAQVMNGSLGAAGRGRGAGMPYPAPAMQGATSSVLAETLTQVSPQMAGHAGLNTAQAGGMTKMGMTGNTSPFGQPFSQTGGQPMGATGVNPQLASKQSMVNSLPAFPTDIKNTSVTTVPNMSQLQTSVGIVPAQGIATGPTADPEKRKLIQQQLVLLLHAHKCQRREQANGEVRACSLPHCRTMKNVLNHMTHCQAGKACQVAHCASSRQIISHWKNCTRHDCPVCLPLKNASDKRNQQTILGSPASGIQNTIGSVGAGQQNATSLSNPNPIDPSSMQRAYAALGLPYMNQPQTQLQPQVPGQQPAQPPAHQQMRTLNALGNNPMSIPAGGITTDQQPPNLISESALPTSLGATNPLMNDGSNSDSIGSLSTIPTAAPPSSTGVRKGWHEHVTQDLRSHLVHKLVQAIFPTPDPAALKDRRMENLVAYAKKVEGDMYESANSRDEYYHLLAEKIYKIQKELEEKRRSRLHKQGILGNQPALPAPGAQPPVIPPTQSVRPPNGPLSLPVNRVQVSQGMNSFNPMSLGNVQLPQAPMGPRAASPMNHSVQMNSMASVPGMAISPSRMPQPPNMMGTHANNIMAQAPTQNQFLPQNQFPSSSGAMSVNSVGMGQPATQAGVSQGQVPGGTLPNPLNMLAPQTSQLPCPPVTQSPLHPTPPPASTAAGMPSLQHPTPPGMTPPQPAAPTQPSTPVSSGQTPTPTPGSVPSAAQTQSTPTVQAAAQAQVTPQPQTPVQPPSVATPQSSQQQPTPVHTQPPGTPLSQAAASIDNRVPTPSSVTSAETSSQQPGPDVPMLEMKTEVQTDDAEPDPAESKGEPRSEMMEEDLQGSSQVKEETDTTEQKSEPMEVEEKKPEVKVEAKEEEENSANGTASQSTSPSQPRKKIFKPEELRQALMPTLEALYRQDPESLPFRQPVDPQLLGIPDYFDIVKNPMDLSTIKRKLDTGQYQEPWQYVDDVWLMFNNAWLYNRKTSRVYKFCSKLAEVFEQEIDPVMQSLGYCCGRKYEFSPQTLCCYGKQLCTIPRDAAYYSYQNRYHFCEKCFTEIQGENVTLGDDPSQPQTTISKDQFEKKKNDTLDPEPFVDCKECGRKMHQICVLHYDIIWPSGFVCDNCLKKTGRPRKENKFSAKRLQTTRLGNHLEDRVNKFLRRQNHPEAGEVFVRVVASSDKTVEVKPGMKSRFVDSGEMSESFPYRTKALFAFEEIDGVDVCFFGMHVQEYGSDCPPPNTRRVYISYLDSIHFFRPRCLRTAVYHEILIGYLEYVKKLGYVTGHIWACPPSEGDDYIFHCHPPDQKIPKPKRLQEWYKKMLDKAFAERIINDYKDIFKQANEDRLTSAKELPYFEGDFWPNVLEESIKELEQEEEERKKEESTAASETPEGSQGDSKNAKKKNNKKTNKNKSSISRANKKKPSMPNVSNDLSQKLYATMEKHKEVFFVIHLHAGPVISTQPPIVDPDPLLSCDLMDGRDAFLTLARDKHWEFSSLRRSKWSTLCMLVELHTQGQDRFVYTCNECKHHVETRWHCTVCEDYDLCINCYNTKSHTHKMVKWGLGLDDEGSSQGEPQSKSPQESRRLSIQRCIQSLVHACQCRNANCSLPSCQKMKRVVQHTKGCKRKTNGGCPVCKQLIALCCYHAKHCQENKCPVPFCLNIKHKLRQQQIQHRLQQAQLMRRRMATMNTRNVPQQSLPSPTSAPPGTPTQQPSTPQTPQPPAQPQPSPVNMSPAGFPSVARTQPPTIVSAGKPTNQVPAPPPPAQPPPAAVEAARQIEREGQQQQHLYRANINNGMPPGRAGMGTPGSQMAPVGLNVPRPNQVSGPVMSSMPPGQWQQAPIPQQQPMPGMPRPVMSMQAQAAVAGPRMPNVQPPRSISPSALQDLLRTLKSPSSPQQQQQVLNILKSNPQLMAAFIKQRTAKYVANQPGMQPQPGLQSQPGMQPQPGMHQQPSLQNLNAMQAGVPRPGVPPPQQAMGGLNPQGQALNIMNPGHNPNMANMNPQYREMVRRQLLQHQQQQQQQQQQQQQQQQSSASLAGGMAGHSQFQQPQGPGGYAPAMQQQRMQQHLPIQGSSMGQMAAPMGQLGQMGQPGLGADSTPNIQQALQQRILQQQQMKQQIGSPGQPNPMSPQQHMLSGQPQASHLPGQQIATSLSNQVRSPAPVQSPRPQSQPPHSSPSPRIQPQPSPHHVSPQTGSPHPGLAVTMASSMDQGHLGNPEQSAMLPQLNTPNRSALSSELSLVGDTTGDTLEKFVEGL</sequence>
<name>CBP_RAT</name>
<protein>
    <recommendedName>
        <fullName>Histone lysine acetyltransferase CREBBP</fullName>
        <ecNumber evidence="4">2.3.1.48</ecNumber>
    </recommendedName>
    <alternativeName>
        <fullName>Protein lactyltransferas CREBBP</fullName>
        <ecNumber evidence="4">2.3.1.-</ecNumber>
    </alternativeName>
    <alternativeName>
        <fullName>Protein-lysine acetyltransferase CREBBP</fullName>
        <ecNumber evidence="4">2.3.1.-</ecNumber>
    </alternativeName>
</protein>
<feature type="initiator methionine" description="Removed" evidence="4">
    <location>
        <position position="1"/>
    </location>
</feature>
<feature type="chain" id="PRO_0000409385" description="Histone lysine acetyltransferase CREBBP">
    <location>
        <begin position="2"/>
        <end position="2442"/>
    </location>
</feature>
<feature type="domain" description="KIX" evidence="9">
    <location>
        <begin position="586"/>
        <end position="665"/>
    </location>
</feature>
<feature type="domain" description="Bromo" evidence="6">
    <location>
        <begin position="1086"/>
        <end position="1193"/>
    </location>
</feature>
<feature type="domain" description="CBP/p300-type HAT" evidence="10">
    <location>
        <begin position="1324"/>
        <end position="1701"/>
    </location>
</feature>
<feature type="zinc finger region" description="TAZ-type 1" evidence="7">
    <location>
        <begin position="346"/>
        <end position="432"/>
    </location>
</feature>
<feature type="zinc finger region" description="ZZ-type" evidence="8">
    <location>
        <begin position="1703"/>
        <end position="1751"/>
    </location>
</feature>
<feature type="zinc finger region" description="TAZ-type 2" evidence="7">
    <location>
        <begin position="1766"/>
        <end position="1847"/>
    </location>
</feature>
<feature type="region of interest" description="Disordered" evidence="11">
    <location>
        <begin position="1"/>
        <end position="40"/>
    </location>
</feature>
<feature type="region of interest" description="Disordered" evidence="11">
    <location>
        <begin position="74"/>
        <end position="168"/>
    </location>
</feature>
<feature type="region of interest" description="Interaction with SRCAP" evidence="1">
    <location>
        <begin position="226"/>
        <end position="409"/>
    </location>
</feature>
<feature type="region of interest" description="Disordered" evidence="11">
    <location>
        <begin position="261"/>
        <end position="290"/>
    </location>
</feature>
<feature type="region of interest" description="Disordered" evidence="11">
    <location>
        <begin position="792"/>
        <end position="1084"/>
    </location>
</feature>
<feature type="region of interest" description="Interaction with histone" evidence="4">
    <location>
        <begin position="1125"/>
        <end position="1171"/>
    </location>
</feature>
<feature type="region of interest" description="Interaction with ASF1A" evidence="4">
    <location>
        <begin position="1163"/>
        <end position="1181"/>
    </location>
</feature>
<feature type="region of interest" description="Interaction with histone" evidence="3">
    <location>
        <begin position="1434"/>
        <end position="1436"/>
    </location>
</feature>
<feature type="region of interest" description="Disordered" evidence="11">
    <location>
        <begin position="1557"/>
        <end position="1616"/>
    </location>
</feature>
<feature type="region of interest" description="Disordered" evidence="11">
    <location>
        <begin position="1875"/>
        <end position="1960"/>
    </location>
</feature>
<feature type="region of interest" description="Disordered" evidence="11">
    <location>
        <begin position="2112"/>
        <end position="2421"/>
    </location>
</feature>
<feature type="coiled-coil region" evidence="5">
    <location>
        <begin position="1548"/>
        <end position="1575"/>
    </location>
</feature>
<feature type="compositionally biased region" description="Polar residues" evidence="11">
    <location>
        <begin position="20"/>
        <end position="30"/>
    </location>
</feature>
<feature type="compositionally biased region" description="Polar residues" evidence="11">
    <location>
        <begin position="125"/>
        <end position="168"/>
    </location>
</feature>
<feature type="compositionally biased region" description="Low complexity" evidence="11">
    <location>
        <begin position="261"/>
        <end position="272"/>
    </location>
</feature>
<feature type="compositionally biased region" description="Polar residues" evidence="11">
    <location>
        <begin position="273"/>
        <end position="284"/>
    </location>
</feature>
<feature type="compositionally biased region" description="Polar residues" evidence="11">
    <location>
        <begin position="792"/>
        <end position="825"/>
    </location>
</feature>
<feature type="compositionally biased region" description="Pro residues" evidence="11">
    <location>
        <begin position="846"/>
        <end position="862"/>
    </location>
</feature>
<feature type="compositionally biased region" description="Pro residues" evidence="11">
    <location>
        <begin position="874"/>
        <end position="887"/>
    </location>
</feature>
<feature type="compositionally biased region" description="Polar residues" evidence="11">
    <location>
        <begin position="894"/>
        <end position="906"/>
    </location>
</feature>
<feature type="compositionally biased region" description="Low complexity" evidence="11">
    <location>
        <begin position="909"/>
        <end position="930"/>
    </location>
</feature>
<feature type="compositionally biased region" description="Low complexity" evidence="11">
    <location>
        <begin position="938"/>
        <end position="957"/>
    </location>
</feature>
<feature type="compositionally biased region" description="Polar residues" evidence="11">
    <location>
        <begin position="974"/>
        <end position="989"/>
    </location>
</feature>
<feature type="compositionally biased region" description="Basic and acidic residues" evidence="11">
    <location>
        <begin position="1012"/>
        <end position="1022"/>
    </location>
</feature>
<feature type="compositionally biased region" description="Basic and acidic residues" evidence="11">
    <location>
        <begin position="1033"/>
        <end position="1060"/>
    </location>
</feature>
<feature type="compositionally biased region" description="Polar residues" evidence="11">
    <location>
        <begin position="1067"/>
        <end position="1080"/>
    </location>
</feature>
<feature type="compositionally biased region" description="Basic and acidic residues" evidence="11">
    <location>
        <begin position="1557"/>
        <end position="1569"/>
    </location>
</feature>
<feature type="compositionally biased region" description="Basic residues" evidence="11">
    <location>
        <begin position="1586"/>
        <end position="1596"/>
    </location>
</feature>
<feature type="compositionally biased region" description="Pro residues" evidence="11">
    <location>
        <begin position="1901"/>
        <end position="1913"/>
    </location>
</feature>
<feature type="compositionally biased region" description="Pro residues" evidence="11">
    <location>
        <begin position="1944"/>
        <end position="1955"/>
    </location>
</feature>
<feature type="compositionally biased region" description="Low complexity" evidence="11">
    <location>
        <begin position="2113"/>
        <end position="2138"/>
    </location>
</feature>
<feature type="compositionally biased region" description="Low complexity" evidence="11">
    <location>
        <begin position="2197"/>
        <end position="2217"/>
    </location>
</feature>
<feature type="compositionally biased region" description="Low complexity" evidence="11">
    <location>
        <begin position="2261"/>
        <end position="2280"/>
    </location>
</feature>
<feature type="compositionally biased region" description="Low complexity" evidence="11">
    <location>
        <begin position="2287"/>
        <end position="2305"/>
    </location>
</feature>
<feature type="compositionally biased region" description="Polar residues" evidence="11">
    <location>
        <begin position="2315"/>
        <end position="2327"/>
    </location>
</feature>
<feature type="compositionally biased region" description="Polar residues" evidence="11">
    <location>
        <begin position="2334"/>
        <end position="2343"/>
    </location>
</feature>
<feature type="compositionally biased region" description="Pro residues" evidence="11">
    <location>
        <begin position="2349"/>
        <end position="2372"/>
    </location>
</feature>
<feature type="compositionally biased region" description="Polar residues" evidence="11">
    <location>
        <begin position="2411"/>
        <end position="2421"/>
    </location>
</feature>
<feature type="binding site" evidence="2">
    <location>
        <position position="362"/>
    </location>
    <ligand>
        <name>Zn(2+)</name>
        <dbReference type="ChEBI" id="CHEBI:29105"/>
        <label>1</label>
    </ligand>
</feature>
<feature type="binding site" evidence="2">
    <location>
        <position position="366"/>
    </location>
    <ligand>
        <name>Zn(2+)</name>
        <dbReference type="ChEBI" id="CHEBI:29105"/>
        <label>1</label>
    </ligand>
</feature>
<feature type="binding site" evidence="2">
    <location>
        <position position="379"/>
    </location>
    <ligand>
        <name>Zn(2+)</name>
        <dbReference type="ChEBI" id="CHEBI:29105"/>
        <label>1</label>
    </ligand>
</feature>
<feature type="binding site" evidence="2">
    <location>
        <position position="384"/>
    </location>
    <ligand>
        <name>Zn(2+)</name>
        <dbReference type="ChEBI" id="CHEBI:29105"/>
        <label>1</label>
    </ligand>
</feature>
<feature type="binding site" evidence="2">
    <location>
        <position position="393"/>
    </location>
    <ligand>
        <name>Zn(2+)</name>
        <dbReference type="ChEBI" id="CHEBI:29105"/>
        <label>2</label>
    </ligand>
</feature>
<feature type="binding site" evidence="2">
    <location>
        <position position="397"/>
    </location>
    <ligand>
        <name>Zn(2+)</name>
        <dbReference type="ChEBI" id="CHEBI:29105"/>
        <label>2</label>
    </ligand>
</feature>
<feature type="binding site" evidence="2">
    <location>
        <position position="403"/>
    </location>
    <ligand>
        <name>Zn(2+)</name>
        <dbReference type="ChEBI" id="CHEBI:29105"/>
        <label>2</label>
    </ligand>
</feature>
<feature type="binding site" evidence="2">
    <location>
        <position position="408"/>
    </location>
    <ligand>
        <name>Zn(2+)</name>
        <dbReference type="ChEBI" id="CHEBI:29105"/>
        <label>2</label>
    </ligand>
</feature>
<feature type="binding site" evidence="2">
    <location>
        <position position="417"/>
    </location>
    <ligand>
        <name>Zn(2+)</name>
        <dbReference type="ChEBI" id="CHEBI:29105"/>
        <label>3</label>
    </ligand>
</feature>
<feature type="binding site" evidence="2">
    <location>
        <position position="421"/>
    </location>
    <ligand>
        <name>Zn(2+)</name>
        <dbReference type="ChEBI" id="CHEBI:29105"/>
        <label>3</label>
    </ligand>
</feature>
<feature type="binding site" evidence="2">
    <location>
        <position position="426"/>
    </location>
    <ligand>
        <name>Zn(2+)</name>
        <dbReference type="ChEBI" id="CHEBI:29105"/>
        <label>3</label>
    </ligand>
</feature>
<feature type="binding site" evidence="2">
    <location>
        <position position="429"/>
    </location>
    <ligand>
        <name>Zn(2+)</name>
        <dbReference type="ChEBI" id="CHEBI:29105"/>
        <label>3</label>
    </ligand>
</feature>
<feature type="binding site" evidence="3">
    <location>
        <begin position="1435"/>
        <end position="1437"/>
    </location>
    <ligand>
        <name>acetyl-CoA</name>
        <dbReference type="ChEBI" id="CHEBI:57288"/>
    </ligand>
</feature>
<feature type="binding site" evidence="3">
    <location>
        <begin position="1447"/>
        <end position="1448"/>
    </location>
    <ligand>
        <name>acetyl-CoA</name>
        <dbReference type="ChEBI" id="CHEBI:57288"/>
    </ligand>
</feature>
<feature type="binding site" evidence="3">
    <location>
        <position position="1494"/>
    </location>
    <ligand>
        <name>acetyl-CoA</name>
        <dbReference type="ChEBI" id="CHEBI:57288"/>
    </ligand>
</feature>
<feature type="binding site" evidence="3">
    <location>
        <position position="1499"/>
    </location>
    <ligand>
        <name>acetyl-CoA</name>
        <dbReference type="ChEBI" id="CHEBI:57288"/>
    </ligand>
</feature>
<feature type="binding site" evidence="3">
    <location>
        <position position="1503"/>
    </location>
    <ligand>
        <name>acetyl-CoA</name>
        <dbReference type="ChEBI" id="CHEBI:57288"/>
    </ligand>
</feature>
<feature type="binding site" evidence="8">
    <location>
        <position position="1708"/>
    </location>
    <ligand>
        <name>Zn(2+)</name>
        <dbReference type="ChEBI" id="CHEBI:29105"/>
        <label>4</label>
    </ligand>
</feature>
<feature type="binding site" evidence="8">
    <location>
        <position position="1711"/>
    </location>
    <ligand>
        <name>Zn(2+)</name>
        <dbReference type="ChEBI" id="CHEBI:29105"/>
        <label>4</label>
    </ligand>
</feature>
<feature type="binding site" evidence="8">
    <location>
        <position position="1721"/>
    </location>
    <ligand>
        <name>Zn(2+)</name>
        <dbReference type="ChEBI" id="CHEBI:29105"/>
        <label>5</label>
    </ligand>
</feature>
<feature type="binding site" evidence="8">
    <location>
        <position position="1724"/>
    </location>
    <ligand>
        <name>Zn(2+)</name>
        <dbReference type="ChEBI" id="CHEBI:29105"/>
        <label>5</label>
    </ligand>
</feature>
<feature type="binding site" evidence="8">
    <location>
        <position position="1730"/>
    </location>
    <ligand>
        <name>Zn(2+)</name>
        <dbReference type="ChEBI" id="CHEBI:29105"/>
        <label>4</label>
    </ligand>
</feature>
<feature type="binding site" evidence="8">
    <location>
        <position position="1733"/>
    </location>
    <ligand>
        <name>Zn(2+)</name>
        <dbReference type="ChEBI" id="CHEBI:29105"/>
        <label>4</label>
    </ligand>
</feature>
<feature type="binding site" evidence="8">
    <location>
        <position position="1739"/>
    </location>
    <ligand>
        <name>Zn(2+)</name>
        <dbReference type="ChEBI" id="CHEBI:29105"/>
        <label>5</label>
    </ligand>
</feature>
<feature type="binding site" evidence="8">
    <location>
        <position position="1741"/>
    </location>
    <ligand>
        <name>Zn(2+)</name>
        <dbReference type="ChEBI" id="CHEBI:29105"/>
        <label>5</label>
    </ligand>
</feature>
<feature type="modified residue" description="N-acetylalanine" evidence="4">
    <location>
        <position position="2"/>
    </location>
</feature>
<feature type="modified residue" description="Phosphoserine" evidence="4">
    <location>
        <position position="120"/>
    </location>
</feature>
<feature type="modified residue" description="Omega-N-methylarginine" evidence="4">
    <location>
        <position position="219"/>
    </location>
</feature>
<feature type="modified residue" description="Asymmetric dimethylarginine" evidence="2">
    <location>
        <position position="600"/>
    </location>
</feature>
<feature type="modified residue" description="Asymmetric dimethylarginine" evidence="2">
    <location>
        <position position="624"/>
    </location>
</feature>
<feature type="modified residue" description="N6-acetyllysine" evidence="2">
    <location>
        <position position="656"/>
    </location>
</feature>
<feature type="modified residue" description="N6-acetyllysine" evidence="4">
    <location>
        <position position="1015"/>
    </location>
</feature>
<feature type="modified residue" description="Phosphoserine" evidence="4">
    <location>
        <position position="1031"/>
    </location>
</feature>
<feature type="modified residue" description="Phosphoserine" evidence="4">
    <location>
        <position position="1077"/>
    </location>
</feature>
<feature type="modified residue" description="N6-acetyllysine" evidence="4">
    <location>
        <position position="1217"/>
    </location>
</feature>
<feature type="modified residue" description="Phosphoserine; by IKKA" evidence="4">
    <location>
        <position position="1383"/>
    </location>
</feature>
<feature type="modified residue" description="Phosphoserine; by IKKA" evidence="4">
    <location>
        <position position="1387"/>
    </location>
</feature>
<feature type="modified residue" description="N6-acetyllysine" evidence="4">
    <location>
        <position position="1584"/>
    </location>
</feature>
<feature type="modified residue" description="N6-acetyllysine" evidence="4">
    <location>
        <position position="1592"/>
    </location>
</feature>
<feature type="modified residue" description="N6-acetyllysine" evidence="4">
    <location>
        <position position="1593"/>
    </location>
</feature>
<feature type="modified residue" description="N6-acetyllysine" evidence="4">
    <location>
        <position position="1596"/>
    </location>
</feature>
<feature type="modified residue" description="N6-acetyllysine" evidence="4">
    <location>
        <position position="1598"/>
    </location>
</feature>
<feature type="modified residue" description="N6-acetyllysine" evidence="4">
    <location>
        <position position="1742"/>
    </location>
</feature>
<feature type="modified residue" description="N6-acetyllysine" evidence="4">
    <location>
        <position position="1745"/>
    </location>
</feature>
<feature type="modified residue" description="Phosphoserine" evidence="4">
    <location>
        <position position="1764"/>
    </location>
</feature>
<feature type="modified residue" description="Phosphoserine" evidence="13">
    <location>
        <position position="2064"/>
    </location>
</feature>
<feature type="modified residue" description="Phosphoserine" evidence="4">
    <location>
        <position position="2077"/>
    </location>
</feature>
<feature type="modified residue" description="Phosphoserine" evidence="4">
    <location>
        <position position="2080"/>
    </location>
</feature>
<feature type="modified residue" description="Phosphoserine" evidence="2">
    <location>
        <position position="2351"/>
    </location>
</feature>
<feature type="cross-link" description="Glycyl lysine isopeptide (Lys-Gly) (interchain with G-Cter in SUMO1)" evidence="2">
    <location>
        <position position="999"/>
    </location>
</feature>
<feature type="cross-link" description="Glycyl lysine isopeptide (Lys-Gly) (interchain with G-Cter in SUMO1)" evidence="2">
    <location>
        <position position="1034"/>
    </location>
</feature>
<feature type="cross-link" description="Glycyl lysine isopeptide (Lys-Gly) (interchain with G-Cter in SUMO1)" evidence="2">
    <location>
        <position position="1057"/>
    </location>
</feature>
<evidence type="ECO:0000250" key="1"/>
<evidence type="ECO:0000250" key="2">
    <source>
        <dbReference type="UniProtKB" id="P45481"/>
    </source>
</evidence>
<evidence type="ECO:0000250" key="3">
    <source>
        <dbReference type="UniProtKB" id="Q09472"/>
    </source>
</evidence>
<evidence type="ECO:0000250" key="4">
    <source>
        <dbReference type="UniProtKB" id="Q92793"/>
    </source>
</evidence>
<evidence type="ECO:0000255" key="5"/>
<evidence type="ECO:0000255" key="6">
    <source>
        <dbReference type="PROSITE-ProRule" id="PRU00035"/>
    </source>
</evidence>
<evidence type="ECO:0000255" key="7">
    <source>
        <dbReference type="PROSITE-ProRule" id="PRU00203"/>
    </source>
</evidence>
<evidence type="ECO:0000255" key="8">
    <source>
        <dbReference type="PROSITE-ProRule" id="PRU00228"/>
    </source>
</evidence>
<evidence type="ECO:0000255" key="9">
    <source>
        <dbReference type="PROSITE-ProRule" id="PRU00311"/>
    </source>
</evidence>
<evidence type="ECO:0000255" key="10">
    <source>
        <dbReference type="PROSITE-ProRule" id="PRU01065"/>
    </source>
</evidence>
<evidence type="ECO:0000256" key="11">
    <source>
        <dbReference type="SAM" id="MobiDB-lite"/>
    </source>
</evidence>
<evidence type="ECO:0000269" key="12">
    <source>
    </source>
</evidence>
<evidence type="ECO:0007744" key="13">
    <source>
    </source>
</evidence>